<keyword id="KW-0450">Lipoyl</keyword>
<keyword id="KW-1185">Reference proteome</keyword>
<comment type="function">
    <text evidence="1">The glycine cleavage system catalyzes the degradation of glycine. The H protein shuttles the methylamine group of glycine from the P protein to the T protein.</text>
</comment>
<comment type="cofactor">
    <cofactor evidence="1">
        <name>(R)-lipoate</name>
        <dbReference type="ChEBI" id="CHEBI:83088"/>
    </cofactor>
    <text evidence="1">Binds 1 lipoyl cofactor covalently.</text>
</comment>
<comment type="subunit">
    <text evidence="1">The glycine cleavage system is composed of four proteins: P, T, L and H.</text>
</comment>
<comment type="similarity">
    <text evidence="1">Belongs to the GcvH family.</text>
</comment>
<gene>
    <name evidence="1" type="primary">gcvH</name>
    <name type="ordered locus">Hhal_1191</name>
</gene>
<dbReference type="EMBL" id="CP000544">
    <property type="protein sequence ID" value="ABM61966.1"/>
    <property type="molecule type" value="Genomic_DNA"/>
</dbReference>
<dbReference type="RefSeq" id="WP_011813989.1">
    <property type="nucleotide sequence ID" value="NC_008789.1"/>
</dbReference>
<dbReference type="SMR" id="A1WWA4"/>
<dbReference type="STRING" id="349124.Hhal_1191"/>
<dbReference type="KEGG" id="hha:Hhal_1191"/>
<dbReference type="eggNOG" id="COG0509">
    <property type="taxonomic scope" value="Bacteria"/>
</dbReference>
<dbReference type="HOGENOM" id="CLU_097408_2_1_6"/>
<dbReference type="OrthoDB" id="9796712at2"/>
<dbReference type="Proteomes" id="UP000000647">
    <property type="component" value="Chromosome"/>
</dbReference>
<dbReference type="GO" id="GO:0005829">
    <property type="term" value="C:cytosol"/>
    <property type="evidence" value="ECO:0007669"/>
    <property type="project" value="TreeGrafter"/>
</dbReference>
<dbReference type="GO" id="GO:0005960">
    <property type="term" value="C:glycine cleavage complex"/>
    <property type="evidence" value="ECO:0007669"/>
    <property type="project" value="InterPro"/>
</dbReference>
<dbReference type="GO" id="GO:0019464">
    <property type="term" value="P:glycine decarboxylation via glycine cleavage system"/>
    <property type="evidence" value="ECO:0007669"/>
    <property type="project" value="UniProtKB-UniRule"/>
</dbReference>
<dbReference type="CDD" id="cd06848">
    <property type="entry name" value="GCS_H"/>
    <property type="match status" value="1"/>
</dbReference>
<dbReference type="Gene3D" id="2.40.50.100">
    <property type="match status" value="1"/>
</dbReference>
<dbReference type="HAMAP" id="MF_00272">
    <property type="entry name" value="GcvH"/>
    <property type="match status" value="1"/>
</dbReference>
<dbReference type="InterPro" id="IPR003016">
    <property type="entry name" value="2-oxoA_DH_lipoyl-BS"/>
</dbReference>
<dbReference type="InterPro" id="IPR000089">
    <property type="entry name" value="Biotin_lipoyl"/>
</dbReference>
<dbReference type="InterPro" id="IPR002930">
    <property type="entry name" value="GCV_H"/>
</dbReference>
<dbReference type="InterPro" id="IPR033753">
    <property type="entry name" value="GCV_H/Fam206"/>
</dbReference>
<dbReference type="InterPro" id="IPR017453">
    <property type="entry name" value="GCV_H_sub"/>
</dbReference>
<dbReference type="InterPro" id="IPR011053">
    <property type="entry name" value="Single_hybrid_motif"/>
</dbReference>
<dbReference type="NCBIfam" id="TIGR00527">
    <property type="entry name" value="gcvH"/>
    <property type="match status" value="1"/>
</dbReference>
<dbReference type="NCBIfam" id="NF002270">
    <property type="entry name" value="PRK01202.1"/>
    <property type="match status" value="1"/>
</dbReference>
<dbReference type="PANTHER" id="PTHR11715">
    <property type="entry name" value="GLYCINE CLEAVAGE SYSTEM H PROTEIN"/>
    <property type="match status" value="1"/>
</dbReference>
<dbReference type="PANTHER" id="PTHR11715:SF3">
    <property type="entry name" value="GLYCINE CLEAVAGE SYSTEM H PROTEIN-RELATED"/>
    <property type="match status" value="1"/>
</dbReference>
<dbReference type="Pfam" id="PF01597">
    <property type="entry name" value="GCV_H"/>
    <property type="match status" value="1"/>
</dbReference>
<dbReference type="SUPFAM" id="SSF51230">
    <property type="entry name" value="Single hybrid motif"/>
    <property type="match status" value="1"/>
</dbReference>
<dbReference type="PROSITE" id="PS50968">
    <property type="entry name" value="BIOTINYL_LIPOYL"/>
    <property type="match status" value="1"/>
</dbReference>
<dbReference type="PROSITE" id="PS00189">
    <property type="entry name" value="LIPOYL"/>
    <property type="match status" value="1"/>
</dbReference>
<organism>
    <name type="scientific">Halorhodospira halophila (strain DSM 244 / SL1)</name>
    <name type="common">Ectothiorhodospira halophila (strain DSM 244 / SL1)</name>
    <dbReference type="NCBI Taxonomy" id="349124"/>
    <lineage>
        <taxon>Bacteria</taxon>
        <taxon>Pseudomonadati</taxon>
        <taxon>Pseudomonadota</taxon>
        <taxon>Gammaproteobacteria</taxon>
        <taxon>Chromatiales</taxon>
        <taxon>Ectothiorhodospiraceae</taxon>
        <taxon>Halorhodospira</taxon>
    </lineage>
</organism>
<proteinExistence type="inferred from homology"/>
<reference key="1">
    <citation type="submission" date="2006-12" db="EMBL/GenBank/DDBJ databases">
        <title>Complete sequence of Halorhodospira halophila SL1.</title>
        <authorList>
            <consortium name="US DOE Joint Genome Institute"/>
            <person name="Copeland A."/>
            <person name="Lucas S."/>
            <person name="Lapidus A."/>
            <person name="Barry K."/>
            <person name="Detter J.C."/>
            <person name="Glavina del Rio T."/>
            <person name="Hammon N."/>
            <person name="Israni S."/>
            <person name="Dalin E."/>
            <person name="Tice H."/>
            <person name="Pitluck S."/>
            <person name="Saunders E."/>
            <person name="Brettin T."/>
            <person name="Bruce D."/>
            <person name="Han C."/>
            <person name="Tapia R."/>
            <person name="Schmutz J."/>
            <person name="Larimer F."/>
            <person name="Land M."/>
            <person name="Hauser L."/>
            <person name="Kyrpides N."/>
            <person name="Mikhailova N."/>
            <person name="Hoff W."/>
            <person name="Richardson P."/>
        </authorList>
    </citation>
    <scope>NUCLEOTIDE SEQUENCE [LARGE SCALE GENOMIC DNA]</scope>
    <source>
        <strain>DSM 244 / SL1</strain>
    </source>
</reference>
<protein>
    <recommendedName>
        <fullName evidence="1">Glycine cleavage system H protein</fullName>
    </recommendedName>
</protein>
<evidence type="ECO:0000255" key="1">
    <source>
        <dbReference type="HAMAP-Rule" id="MF_00272"/>
    </source>
</evidence>
<evidence type="ECO:0000255" key="2">
    <source>
        <dbReference type="PROSITE-ProRule" id="PRU01066"/>
    </source>
</evidence>
<name>GCSH_HALHL</name>
<sequence>MSQVPEDLKYTRNHEWVRVEADGSVTVGITEHAQESLGDLVFVEPPEAGTQVQAEEACAVVESVKAASDVYAPISGEVTQGNEALADNPEAVNTDPYGDGWIMRIQPADTSEIDGLLDAAAYQELVADEG</sequence>
<feature type="chain" id="PRO_0000302381" description="Glycine cleavage system H protein">
    <location>
        <begin position="1"/>
        <end position="130"/>
    </location>
</feature>
<feature type="domain" description="Lipoyl-binding" evidence="2">
    <location>
        <begin position="24"/>
        <end position="106"/>
    </location>
</feature>
<feature type="modified residue" description="N6-lipoyllysine" evidence="1">
    <location>
        <position position="65"/>
    </location>
</feature>
<accession>A1WWA4</accession>